<accession>B9LKR9</accession>
<gene>
    <name evidence="1" type="primary">hemE</name>
    <name type="ordered locus">Chy400_2806</name>
</gene>
<name>DCUP_CHLSY</name>
<organism>
    <name type="scientific">Chloroflexus aurantiacus (strain ATCC 29364 / DSM 637 / Y-400-fl)</name>
    <dbReference type="NCBI Taxonomy" id="480224"/>
    <lineage>
        <taxon>Bacteria</taxon>
        <taxon>Bacillati</taxon>
        <taxon>Chloroflexota</taxon>
        <taxon>Chloroflexia</taxon>
        <taxon>Chloroflexales</taxon>
        <taxon>Chloroflexineae</taxon>
        <taxon>Chloroflexaceae</taxon>
        <taxon>Chloroflexus</taxon>
    </lineage>
</organism>
<proteinExistence type="inferred from homology"/>
<evidence type="ECO:0000255" key="1">
    <source>
        <dbReference type="HAMAP-Rule" id="MF_00218"/>
    </source>
</evidence>
<protein>
    <recommendedName>
        <fullName evidence="1">Uroporphyrinogen decarboxylase</fullName>
        <shortName evidence="1">UPD</shortName>
        <shortName evidence="1">URO-D</shortName>
        <ecNumber evidence="1">4.1.1.37</ecNumber>
    </recommendedName>
</protein>
<keyword id="KW-0963">Cytoplasm</keyword>
<keyword id="KW-0210">Decarboxylase</keyword>
<keyword id="KW-0456">Lyase</keyword>
<keyword id="KW-0627">Porphyrin biosynthesis</keyword>
<sequence length="355" mass="39488">MRDRFLRACRRQPVDRTPIWLMRQAGRYMPEYRAIRERYGFLQMVKTPEVAAEVTLQPVQAFGVDAAIIFADILPPLEGLGLQLTYEKGEGPVIHNPIRSPHDVSVLRSCDPRETVAYTLAALQLVKRELNGLPLIGFSGAPFTLASYAIEGGGSREYRLTKRFMYEQPAAWHDLMERLSRLVADYLIAQIEAGADAVQIFDSWAGALSPADYRAYVLRHTQALVQTIRARLGDVTPPIIYFGTDMAGLAGEVRQIGADVLGVDWRIDLDVAWAQYGFNHAVQGNLDPMTLFAPPSIIAARARDILERAGGRPGHIFNLGHGILTETPVDHVRYLVEFVQSYPLPATAPVLQEVV</sequence>
<dbReference type="EC" id="4.1.1.37" evidence="1"/>
<dbReference type="EMBL" id="CP001364">
    <property type="protein sequence ID" value="ACM54194.1"/>
    <property type="molecule type" value="Genomic_DNA"/>
</dbReference>
<dbReference type="SMR" id="B9LKR9"/>
<dbReference type="KEGG" id="chl:Chy400_2806"/>
<dbReference type="HOGENOM" id="CLU_040933_0_1_0"/>
<dbReference type="OrthoDB" id="9780425at2"/>
<dbReference type="UniPathway" id="UPA00251">
    <property type="reaction ID" value="UER00321"/>
</dbReference>
<dbReference type="GO" id="GO:0005829">
    <property type="term" value="C:cytosol"/>
    <property type="evidence" value="ECO:0007669"/>
    <property type="project" value="TreeGrafter"/>
</dbReference>
<dbReference type="GO" id="GO:0004853">
    <property type="term" value="F:uroporphyrinogen decarboxylase activity"/>
    <property type="evidence" value="ECO:0007669"/>
    <property type="project" value="UniProtKB-UniRule"/>
</dbReference>
<dbReference type="GO" id="GO:0006782">
    <property type="term" value="P:protoporphyrinogen IX biosynthetic process"/>
    <property type="evidence" value="ECO:0007669"/>
    <property type="project" value="UniProtKB-UniRule"/>
</dbReference>
<dbReference type="CDD" id="cd00717">
    <property type="entry name" value="URO-D"/>
    <property type="match status" value="1"/>
</dbReference>
<dbReference type="FunFam" id="3.20.20.210:FF:000005">
    <property type="entry name" value="Uroporphyrinogen decarboxylase"/>
    <property type="match status" value="1"/>
</dbReference>
<dbReference type="Gene3D" id="3.20.20.210">
    <property type="match status" value="1"/>
</dbReference>
<dbReference type="HAMAP" id="MF_00218">
    <property type="entry name" value="URO_D"/>
    <property type="match status" value="1"/>
</dbReference>
<dbReference type="InterPro" id="IPR038071">
    <property type="entry name" value="UROD/MetE-like_sf"/>
</dbReference>
<dbReference type="InterPro" id="IPR006361">
    <property type="entry name" value="Uroporphyrinogen_deCO2ase_HemE"/>
</dbReference>
<dbReference type="InterPro" id="IPR000257">
    <property type="entry name" value="Uroporphyrinogen_deCOase"/>
</dbReference>
<dbReference type="NCBIfam" id="TIGR01464">
    <property type="entry name" value="hemE"/>
    <property type="match status" value="1"/>
</dbReference>
<dbReference type="PANTHER" id="PTHR21091">
    <property type="entry name" value="METHYLTETRAHYDROFOLATE:HOMOCYSTEINE METHYLTRANSFERASE RELATED"/>
    <property type="match status" value="1"/>
</dbReference>
<dbReference type="PANTHER" id="PTHR21091:SF169">
    <property type="entry name" value="UROPORPHYRINOGEN DECARBOXYLASE"/>
    <property type="match status" value="1"/>
</dbReference>
<dbReference type="Pfam" id="PF01208">
    <property type="entry name" value="URO-D"/>
    <property type="match status" value="1"/>
</dbReference>
<dbReference type="SUPFAM" id="SSF51726">
    <property type="entry name" value="UROD/MetE-like"/>
    <property type="match status" value="1"/>
</dbReference>
<dbReference type="PROSITE" id="PS00906">
    <property type="entry name" value="UROD_1"/>
    <property type="match status" value="1"/>
</dbReference>
<dbReference type="PROSITE" id="PS00907">
    <property type="entry name" value="UROD_2"/>
    <property type="match status" value="1"/>
</dbReference>
<comment type="function">
    <text evidence="1">Catalyzes the decarboxylation of four acetate groups of uroporphyrinogen-III to yield coproporphyrinogen-III.</text>
</comment>
<comment type="catalytic activity">
    <reaction evidence="1">
        <text>uroporphyrinogen III + 4 H(+) = coproporphyrinogen III + 4 CO2</text>
        <dbReference type="Rhea" id="RHEA:19865"/>
        <dbReference type="ChEBI" id="CHEBI:15378"/>
        <dbReference type="ChEBI" id="CHEBI:16526"/>
        <dbReference type="ChEBI" id="CHEBI:57308"/>
        <dbReference type="ChEBI" id="CHEBI:57309"/>
        <dbReference type="EC" id="4.1.1.37"/>
    </reaction>
</comment>
<comment type="pathway">
    <text evidence="1">Porphyrin-containing compound metabolism; protoporphyrin-IX biosynthesis; coproporphyrinogen-III from 5-aminolevulinate: step 4/4.</text>
</comment>
<comment type="subunit">
    <text evidence="1">Homodimer.</text>
</comment>
<comment type="subcellular location">
    <subcellularLocation>
        <location evidence="1">Cytoplasm</location>
    </subcellularLocation>
</comment>
<comment type="similarity">
    <text evidence="1">Belongs to the uroporphyrinogen decarboxylase family.</text>
</comment>
<feature type="chain" id="PRO_1000197514" description="Uroporphyrinogen decarboxylase">
    <location>
        <begin position="1"/>
        <end position="355"/>
    </location>
</feature>
<feature type="binding site" evidence="1">
    <location>
        <begin position="23"/>
        <end position="27"/>
    </location>
    <ligand>
        <name>substrate</name>
    </ligand>
</feature>
<feature type="binding site" evidence="1">
    <location>
        <position position="72"/>
    </location>
    <ligand>
        <name>substrate</name>
    </ligand>
</feature>
<feature type="binding site" evidence="1">
    <location>
        <position position="148"/>
    </location>
    <ligand>
        <name>substrate</name>
    </ligand>
</feature>
<feature type="binding site" evidence="1">
    <location>
        <position position="203"/>
    </location>
    <ligand>
        <name>substrate</name>
    </ligand>
</feature>
<feature type="binding site" evidence="1">
    <location>
        <position position="321"/>
    </location>
    <ligand>
        <name>substrate</name>
    </ligand>
</feature>
<feature type="site" description="Transition state stabilizer" evidence="1">
    <location>
        <position position="72"/>
    </location>
</feature>
<reference key="1">
    <citation type="submission" date="2009-01" db="EMBL/GenBank/DDBJ databases">
        <title>Complete sequence of Chloroflexus sp. Y-400-fl.</title>
        <authorList>
            <consortium name="US DOE Joint Genome Institute"/>
            <person name="Lucas S."/>
            <person name="Copeland A."/>
            <person name="Lapidus A."/>
            <person name="Glavina del Rio T."/>
            <person name="Dalin E."/>
            <person name="Tice H."/>
            <person name="Bruce D."/>
            <person name="Goodwin L."/>
            <person name="Pitluck S."/>
            <person name="Sims D."/>
            <person name="Kiss H."/>
            <person name="Brettin T."/>
            <person name="Detter J.C."/>
            <person name="Han C."/>
            <person name="Larimer F."/>
            <person name="Land M."/>
            <person name="Hauser L."/>
            <person name="Kyrpides N."/>
            <person name="Ovchinnikova G."/>
            <person name="Bryant D.A."/>
            <person name="Richardson P."/>
        </authorList>
    </citation>
    <scope>NUCLEOTIDE SEQUENCE [LARGE SCALE GENOMIC DNA]</scope>
    <source>
        <strain>ATCC 29364 / DSM 637 / Y-400-fl</strain>
    </source>
</reference>